<accession>Q86UE3</accession>
<accession>A8K913</accession>
<gene>
    <name type="primary">ZNF546</name>
    <name type="synonym">ZNF49</name>
</gene>
<evidence type="ECO:0000255" key="1">
    <source>
        <dbReference type="PROSITE-ProRule" id="PRU00042"/>
    </source>
</evidence>
<evidence type="ECO:0000255" key="2">
    <source>
        <dbReference type="PROSITE-ProRule" id="PRU00119"/>
    </source>
</evidence>
<evidence type="ECO:0000269" key="3">
    <source>
    </source>
</evidence>
<evidence type="ECO:0000269" key="4">
    <source>
    </source>
</evidence>
<evidence type="ECO:0000305" key="5"/>
<evidence type="ECO:0007744" key="6">
    <source>
    </source>
</evidence>
<proteinExistence type="evidence at protein level"/>
<name>ZN546_HUMAN</name>
<keyword id="KW-0238">DNA-binding</keyword>
<keyword id="KW-1017">Isopeptide bond</keyword>
<keyword id="KW-0479">Metal-binding</keyword>
<keyword id="KW-0539">Nucleus</keyword>
<keyword id="KW-1267">Proteomics identification</keyword>
<keyword id="KW-1185">Reference proteome</keyword>
<keyword id="KW-0677">Repeat</keyword>
<keyword id="KW-0804">Transcription</keyword>
<keyword id="KW-0805">Transcription regulation</keyword>
<keyword id="KW-0832">Ubl conjugation</keyword>
<keyword id="KW-0862">Zinc</keyword>
<keyword id="KW-0863">Zinc-finger</keyword>
<dbReference type="EMBL" id="AK292528">
    <property type="protein sequence ID" value="BAF85217.1"/>
    <property type="molecule type" value="mRNA"/>
</dbReference>
<dbReference type="EMBL" id="CH471126">
    <property type="protein sequence ID" value="EAW56930.1"/>
    <property type="molecule type" value="Genomic_DNA"/>
</dbReference>
<dbReference type="EMBL" id="BC045649">
    <property type="protein sequence ID" value="AAH45649.1"/>
    <property type="molecule type" value="mRNA"/>
</dbReference>
<dbReference type="CCDS" id="CCDS12548.1"/>
<dbReference type="RefSeq" id="NP_001284692.1">
    <property type="nucleotide sequence ID" value="NM_001297763.1"/>
</dbReference>
<dbReference type="RefSeq" id="NP_848639.2">
    <property type="nucleotide sequence ID" value="NM_178544.5"/>
</dbReference>
<dbReference type="RefSeq" id="XP_011525201.1">
    <property type="nucleotide sequence ID" value="XM_011526899.2"/>
</dbReference>
<dbReference type="SMR" id="Q86UE3"/>
<dbReference type="BioGRID" id="130869">
    <property type="interactions" value="2"/>
</dbReference>
<dbReference type="FunCoup" id="Q86UE3">
    <property type="interactions" value="33"/>
</dbReference>
<dbReference type="IntAct" id="Q86UE3">
    <property type="interactions" value="25"/>
</dbReference>
<dbReference type="STRING" id="9606.ENSP00000339823"/>
<dbReference type="GlyGen" id="Q86UE3">
    <property type="glycosylation" value="1 site, 1 O-linked glycan (1 site)"/>
</dbReference>
<dbReference type="iPTMnet" id="Q86UE3"/>
<dbReference type="PhosphoSitePlus" id="Q86UE3"/>
<dbReference type="BioMuta" id="ZNF546"/>
<dbReference type="DMDM" id="229462787"/>
<dbReference type="jPOST" id="Q86UE3"/>
<dbReference type="MassIVE" id="Q86UE3"/>
<dbReference type="PaxDb" id="9606-ENSP00000339823"/>
<dbReference type="PeptideAtlas" id="Q86UE3"/>
<dbReference type="ProteomicsDB" id="69808"/>
<dbReference type="Antibodypedia" id="30449">
    <property type="antibodies" value="48 antibodies from 11 providers"/>
</dbReference>
<dbReference type="DNASU" id="339327"/>
<dbReference type="Ensembl" id="ENST00000347077.9">
    <property type="protein sequence ID" value="ENSP00000339823.3"/>
    <property type="gene ID" value="ENSG00000187187.14"/>
</dbReference>
<dbReference type="Ensembl" id="ENST00000626389.3">
    <property type="protein sequence ID" value="ENSP00000487125.1"/>
    <property type="gene ID" value="ENSG00000281526.3"/>
</dbReference>
<dbReference type="GeneID" id="339327"/>
<dbReference type="KEGG" id="hsa:339327"/>
<dbReference type="MANE-Select" id="ENST00000347077.9">
    <property type="protein sequence ID" value="ENSP00000339823.3"/>
    <property type="RefSeq nucleotide sequence ID" value="NM_178544.5"/>
    <property type="RefSeq protein sequence ID" value="NP_848639.2"/>
</dbReference>
<dbReference type="UCSC" id="uc002oms.3">
    <property type="organism name" value="human"/>
</dbReference>
<dbReference type="AGR" id="HGNC:28671"/>
<dbReference type="CTD" id="339327"/>
<dbReference type="DisGeNET" id="339327"/>
<dbReference type="GeneCards" id="ZNF546"/>
<dbReference type="HGNC" id="HGNC:28671">
    <property type="gene designation" value="ZNF546"/>
</dbReference>
<dbReference type="HPA" id="ENSG00000187187">
    <property type="expression patterns" value="Tissue enhanced (testis)"/>
</dbReference>
<dbReference type="neXtProt" id="NX_Q86UE3"/>
<dbReference type="OpenTargets" id="ENSG00000187187"/>
<dbReference type="PharmGKB" id="PA134881362"/>
<dbReference type="VEuPathDB" id="HostDB:ENSG00000187187"/>
<dbReference type="eggNOG" id="KOG1721">
    <property type="taxonomic scope" value="Eukaryota"/>
</dbReference>
<dbReference type="GeneTree" id="ENSGT00940000163602"/>
<dbReference type="InParanoid" id="Q86UE3"/>
<dbReference type="OMA" id="RCASQMI"/>
<dbReference type="OrthoDB" id="9411774at2759"/>
<dbReference type="PAN-GO" id="Q86UE3">
    <property type="GO annotations" value="4 GO annotations based on evolutionary models"/>
</dbReference>
<dbReference type="PhylomeDB" id="Q86UE3"/>
<dbReference type="TreeFam" id="TF343410"/>
<dbReference type="PathwayCommons" id="Q86UE3"/>
<dbReference type="Reactome" id="R-HSA-212436">
    <property type="pathway name" value="Generic Transcription Pathway"/>
</dbReference>
<dbReference type="SignaLink" id="Q86UE3"/>
<dbReference type="BioGRID-ORCS" id="339327">
    <property type="hits" value="12 hits in 1171 CRISPR screens"/>
</dbReference>
<dbReference type="ChiTaRS" id="ZNF546">
    <property type="organism name" value="human"/>
</dbReference>
<dbReference type="GenomeRNAi" id="339327"/>
<dbReference type="Pharos" id="Q86UE3">
    <property type="development level" value="Tdark"/>
</dbReference>
<dbReference type="PRO" id="PR:Q86UE3"/>
<dbReference type="Proteomes" id="UP000005640">
    <property type="component" value="Chromosome 19"/>
</dbReference>
<dbReference type="RNAct" id="Q86UE3">
    <property type="molecule type" value="protein"/>
</dbReference>
<dbReference type="Bgee" id="ENSG00000187187">
    <property type="expression patterns" value="Expressed in corpus callosum and 101 other cell types or tissues"/>
</dbReference>
<dbReference type="ExpressionAtlas" id="Q86UE3">
    <property type="expression patterns" value="baseline and differential"/>
</dbReference>
<dbReference type="GO" id="GO:0005634">
    <property type="term" value="C:nucleus"/>
    <property type="evidence" value="ECO:0000318"/>
    <property type="project" value="GO_Central"/>
</dbReference>
<dbReference type="GO" id="GO:0000981">
    <property type="term" value="F:DNA-binding transcription factor activity, RNA polymerase II-specific"/>
    <property type="evidence" value="ECO:0000318"/>
    <property type="project" value="GO_Central"/>
</dbReference>
<dbReference type="GO" id="GO:0000978">
    <property type="term" value="F:RNA polymerase II cis-regulatory region sequence-specific DNA binding"/>
    <property type="evidence" value="ECO:0000318"/>
    <property type="project" value="GO_Central"/>
</dbReference>
<dbReference type="GO" id="GO:0008270">
    <property type="term" value="F:zinc ion binding"/>
    <property type="evidence" value="ECO:0007669"/>
    <property type="project" value="UniProtKB-KW"/>
</dbReference>
<dbReference type="GO" id="GO:0006357">
    <property type="term" value="P:regulation of transcription by RNA polymerase II"/>
    <property type="evidence" value="ECO:0000318"/>
    <property type="project" value="GO_Central"/>
</dbReference>
<dbReference type="CDD" id="cd07765">
    <property type="entry name" value="KRAB_A-box"/>
    <property type="match status" value="1"/>
</dbReference>
<dbReference type="FunFam" id="3.30.160.60:FF:000204">
    <property type="entry name" value="Zinc finger protein 331"/>
    <property type="match status" value="1"/>
</dbReference>
<dbReference type="FunFam" id="3.30.160.60:FF:000212">
    <property type="entry name" value="zinc finger protein 382 isoform X2"/>
    <property type="match status" value="1"/>
</dbReference>
<dbReference type="FunFam" id="3.30.160.60:FF:000338">
    <property type="entry name" value="zinc finger protein 383"/>
    <property type="match status" value="1"/>
</dbReference>
<dbReference type="FunFam" id="3.30.160.60:FF:001498">
    <property type="entry name" value="Zinc finger protein 404"/>
    <property type="match status" value="1"/>
</dbReference>
<dbReference type="FunFam" id="3.30.160.60:FF:001119">
    <property type="entry name" value="zinc finger protein 408"/>
    <property type="match status" value="1"/>
</dbReference>
<dbReference type="FunFam" id="3.30.160.60:FF:002090">
    <property type="entry name" value="Zinc finger protein 473"/>
    <property type="match status" value="1"/>
</dbReference>
<dbReference type="FunFam" id="3.30.160.60:FF:002750">
    <property type="entry name" value="zinc finger protein 529 isoform X1"/>
    <property type="match status" value="1"/>
</dbReference>
<dbReference type="FunFam" id="3.30.160.60:FF:002254">
    <property type="entry name" value="Zinc finger protein 540"/>
    <property type="match status" value="2"/>
</dbReference>
<dbReference type="FunFam" id="3.30.160.60:FF:001412">
    <property type="entry name" value="Zinc finger protein 546"/>
    <property type="match status" value="1"/>
</dbReference>
<dbReference type="FunFam" id="3.30.160.60:FF:002574">
    <property type="entry name" value="Zinc finger protein 546"/>
    <property type="match status" value="1"/>
</dbReference>
<dbReference type="FunFam" id="3.30.160.60:FF:000963">
    <property type="entry name" value="zinc finger protein 546"/>
    <property type="match status" value="2"/>
</dbReference>
<dbReference type="FunFam" id="3.30.160.60:FF:000052">
    <property type="entry name" value="zinc finger protein 546 isoform X1"/>
    <property type="match status" value="5"/>
</dbReference>
<dbReference type="FunFam" id="3.30.160.60:FF:000737">
    <property type="entry name" value="Zinc finger protein 565"/>
    <property type="match status" value="1"/>
</dbReference>
<dbReference type="FunFam" id="3.30.160.60:FF:001270">
    <property type="entry name" value="zinc finger protein 583 isoform X1"/>
    <property type="match status" value="1"/>
</dbReference>
<dbReference type="FunFam" id="3.30.160.60:FF:001111">
    <property type="entry name" value="Zinc finger protein 92 homolog"/>
    <property type="match status" value="2"/>
</dbReference>
<dbReference type="Gene3D" id="6.10.140.140">
    <property type="match status" value="1"/>
</dbReference>
<dbReference type="Gene3D" id="3.30.160.60">
    <property type="entry name" value="Classic Zinc Finger"/>
    <property type="match status" value="22"/>
</dbReference>
<dbReference type="InterPro" id="IPR001909">
    <property type="entry name" value="KRAB"/>
</dbReference>
<dbReference type="InterPro" id="IPR036051">
    <property type="entry name" value="KRAB_dom_sf"/>
</dbReference>
<dbReference type="InterPro" id="IPR036236">
    <property type="entry name" value="Znf_C2H2_sf"/>
</dbReference>
<dbReference type="InterPro" id="IPR013087">
    <property type="entry name" value="Znf_C2H2_type"/>
</dbReference>
<dbReference type="PANTHER" id="PTHR24381">
    <property type="entry name" value="ZINC FINGER PROTEIN"/>
    <property type="match status" value="1"/>
</dbReference>
<dbReference type="PANTHER" id="PTHR24381:SF435">
    <property type="entry name" value="ZINC FINGER PROTEIN 59"/>
    <property type="match status" value="1"/>
</dbReference>
<dbReference type="Pfam" id="PF01352">
    <property type="entry name" value="KRAB"/>
    <property type="match status" value="1"/>
</dbReference>
<dbReference type="Pfam" id="PF00096">
    <property type="entry name" value="zf-C2H2"/>
    <property type="match status" value="21"/>
</dbReference>
<dbReference type="SMART" id="SM00349">
    <property type="entry name" value="KRAB"/>
    <property type="match status" value="1"/>
</dbReference>
<dbReference type="SMART" id="SM00355">
    <property type="entry name" value="ZnF_C2H2"/>
    <property type="match status" value="22"/>
</dbReference>
<dbReference type="SUPFAM" id="SSF57667">
    <property type="entry name" value="beta-beta-alpha zinc fingers"/>
    <property type="match status" value="12"/>
</dbReference>
<dbReference type="SUPFAM" id="SSF109640">
    <property type="entry name" value="KRAB domain (Kruppel-associated box)"/>
    <property type="match status" value="1"/>
</dbReference>
<dbReference type="PROSITE" id="PS50805">
    <property type="entry name" value="KRAB"/>
    <property type="match status" value="1"/>
</dbReference>
<dbReference type="PROSITE" id="PS00028">
    <property type="entry name" value="ZINC_FINGER_C2H2_1"/>
    <property type="match status" value="22"/>
</dbReference>
<dbReference type="PROSITE" id="PS50157">
    <property type="entry name" value="ZINC_FINGER_C2H2_2"/>
    <property type="match status" value="22"/>
</dbReference>
<feature type="chain" id="PRO_0000234582" description="Zinc finger protein 546">
    <location>
        <begin position="1"/>
        <end position="836"/>
    </location>
</feature>
<feature type="domain" description="KRAB" evidence="2">
    <location>
        <begin position="60"/>
        <end position="131"/>
    </location>
</feature>
<feature type="zinc finger region" description="C2H2-type 1" evidence="1">
    <location>
        <begin position="217"/>
        <end position="239"/>
    </location>
</feature>
<feature type="zinc finger region" description="C2H2-type 2" evidence="1">
    <location>
        <begin position="245"/>
        <end position="267"/>
    </location>
</feature>
<feature type="zinc finger region" description="C2H2-type 3" evidence="1">
    <location>
        <begin position="273"/>
        <end position="295"/>
    </location>
</feature>
<feature type="zinc finger region" description="C2H2-type 4" evidence="1">
    <location>
        <begin position="301"/>
        <end position="323"/>
    </location>
</feature>
<feature type="zinc finger region" description="C2H2-type 5" evidence="1">
    <location>
        <begin position="329"/>
        <end position="351"/>
    </location>
</feature>
<feature type="zinc finger region" description="C2H2-type 6" evidence="1">
    <location>
        <begin position="357"/>
        <end position="379"/>
    </location>
</feature>
<feature type="zinc finger region" description="C2H2-type 7" evidence="1">
    <location>
        <begin position="385"/>
        <end position="407"/>
    </location>
</feature>
<feature type="zinc finger region" description="C2H2-type 8" evidence="1">
    <location>
        <begin position="413"/>
        <end position="435"/>
    </location>
</feature>
<feature type="zinc finger region" description="C2H2-type 9" evidence="1">
    <location>
        <begin position="441"/>
        <end position="463"/>
    </location>
</feature>
<feature type="zinc finger region" description="C2H2-type 10" evidence="1">
    <location>
        <begin position="469"/>
        <end position="491"/>
    </location>
</feature>
<feature type="zinc finger region" description="C2H2-type 11" evidence="1">
    <location>
        <begin position="497"/>
        <end position="519"/>
    </location>
</feature>
<feature type="zinc finger region" description="C2H2-type 12" evidence="1">
    <location>
        <begin position="525"/>
        <end position="547"/>
    </location>
</feature>
<feature type="zinc finger region" description="C2H2-type 13" evidence="1">
    <location>
        <begin position="553"/>
        <end position="575"/>
    </location>
</feature>
<feature type="zinc finger region" description="C2H2-type 14" evidence="1">
    <location>
        <begin position="581"/>
        <end position="603"/>
    </location>
</feature>
<feature type="zinc finger region" description="C2H2-type 15" evidence="1">
    <location>
        <begin position="609"/>
        <end position="631"/>
    </location>
</feature>
<feature type="zinc finger region" description="C2H2-type 16" evidence="1">
    <location>
        <begin position="637"/>
        <end position="659"/>
    </location>
</feature>
<feature type="zinc finger region" description="C2H2-type 17" evidence="1">
    <location>
        <begin position="665"/>
        <end position="687"/>
    </location>
</feature>
<feature type="zinc finger region" description="C2H2-type 18" evidence="1">
    <location>
        <begin position="693"/>
        <end position="715"/>
    </location>
</feature>
<feature type="zinc finger region" description="C2H2-type 19" evidence="1">
    <location>
        <begin position="721"/>
        <end position="743"/>
    </location>
</feature>
<feature type="zinc finger region" description="C2H2-type 20" evidence="1">
    <location>
        <begin position="749"/>
        <end position="771"/>
    </location>
</feature>
<feature type="zinc finger region" description="C2H2-type 21" evidence="1">
    <location>
        <begin position="777"/>
        <end position="799"/>
    </location>
</feature>
<feature type="zinc finger region" description="C2H2-type 22" evidence="1">
    <location>
        <begin position="805"/>
        <end position="827"/>
    </location>
</feature>
<feature type="cross-link" description="Glycyl lysine isopeptide (Lys-Gly) (interchain with G-Cter in SUMO2)" evidence="6">
    <location>
        <position position="179"/>
    </location>
</feature>
<feature type="sequence variant" id="VAR_035587" description="In a breast cancer sample; somatic mutation." evidence="4">
    <original>L</original>
    <variation>V</variation>
    <location>
        <position position="15"/>
    </location>
</feature>
<feature type="sequence variant" id="VAR_055271" description="In dbSNP:rs17854378." evidence="3">
    <original>Q</original>
    <variation>R</variation>
    <location>
        <position position="201"/>
    </location>
</feature>
<feature type="sequence variant" id="VAR_055272" description="In dbSNP:rs2111543.">
    <original>R</original>
    <variation>T</variation>
    <location>
        <position position="243"/>
    </location>
</feature>
<feature type="sequence variant" id="VAR_055273" description="In dbSNP:rs2111544.">
    <original>A</original>
    <variation>V</variation>
    <location>
        <position position="253"/>
    </location>
</feature>
<feature type="sequence variant" id="VAR_055274" description="In dbSNP:rs17710336.">
    <original>V</original>
    <variation>E</variation>
    <location>
        <position position="298"/>
    </location>
</feature>
<feature type="sequence variant" id="VAR_055275" description="In dbSNP:rs12460371.">
    <original>E</original>
    <variation>G</variation>
    <location>
        <position position="427"/>
    </location>
</feature>
<feature type="sequence variant" id="VAR_055276" description="In dbSNP:rs7255186.">
    <original>L</original>
    <variation>F</variation>
    <location>
        <position position="452"/>
    </location>
</feature>
<feature type="sequence variant" id="VAR_055277" description="In dbSNP:rs12373540.">
    <original>L</original>
    <variation>F</variation>
    <location>
        <position position="652"/>
    </location>
</feature>
<comment type="function">
    <text>May be involved in transcriptional regulation.</text>
</comment>
<comment type="subcellular location">
    <subcellularLocation>
        <location evidence="5">Nucleus</location>
    </subcellularLocation>
</comment>
<comment type="similarity">
    <text evidence="5">Belongs to the krueppel C2H2-type zinc-finger protein family.</text>
</comment>
<protein>
    <recommendedName>
        <fullName>Zinc finger protein 546</fullName>
    </recommendedName>
    <alternativeName>
        <fullName>Zinc finger protein 49</fullName>
    </alternativeName>
</protein>
<sequence length="836" mass="98405">MQVDPPLHGPPNDFLIFQIIPLHSLSIMPRFLWILCFSMEETQGELTSSCGSKTMANVSLAFRDVSIDLSQEEWECLDAVQRDLYKDVMLENYSNLVSLGYTIPKPDVITLLEQEKEPWIVMREGTRNWFTDLEYKYITKNLLSEKNVCKIYLSQLQTGEKSKNTIHEDTIFRNGLQCKHEFERQERHQMGCVSQMLIQKQISHPLHPKIHAREKSYECKECRKAFRQQSYLIQHLRIHTGERPYKCMECGKAFCRVGDLRVHHTIHAGERPYECKECGKAFRLHYHLTEHQRIHSGVKPYECKECGKAFSRVRDLRVHQTIHAGERPYECKECGKAFRLHYQLTEHQRIHTGERPYECKVCGKTFRVQRHISQHQKIHTGVKPYKCNECGKAFSHGSYLVQHQKIHTGEKPYECKECGKSFSFHAELARHRRIHTGEKPYECRECGKAFRLQTELTRHHRTHTGEKPYECKECGKAFICGYQLTLHLRTHTGEIPYECKECGKTFSSRYHLTQHYRIHTGEKPYICNECGKAFRLQGELTRHHRIHTCEKPYECKECGKAFIHSNQFISHQRIHTSESTYICKECGKIFSRRYNLTQHFKIHTGEKPYICNECGKAFRFQTELTQHHRIHTGEKPYKCTECGKAFIRSTHLTQHHRIHTGEKPYECTECGKTFSRHYHLTQHHRGHTGEKPYICNECGNAFICSYRLTLHQRIHTGELPYECKECGKTFSRRYHLTQHFRLHTGEKPYSCKECGNAFRLQAELTRHHIVHTGEKPYKCKECGKAFSVNSELTRHHRIHTGEKPYQCKECGKAFIRSDQLTLHQRNHISEEVLCIM</sequence>
<reference key="1">
    <citation type="journal article" date="2004" name="Nat. Genet.">
        <title>Complete sequencing and characterization of 21,243 full-length human cDNAs.</title>
        <authorList>
            <person name="Ota T."/>
            <person name="Suzuki Y."/>
            <person name="Nishikawa T."/>
            <person name="Otsuki T."/>
            <person name="Sugiyama T."/>
            <person name="Irie R."/>
            <person name="Wakamatsu A."/>
            <person name="Hayashi K."/>
            <person name="Sato H."/>
            <person name="Nagai K."/>
            <person name="Kimura K."/>
            <person name="Makita H."/>
            <person name="Sekine M."/>
            <person name="Obayashi M."/>
            <person name="Nishi T."/>
            <person name="Shibahara T."/>
            <person name="Tanaka T."/>
            <person name="Ishii S."/>
            <person name="Yamamoto J."/>
            <person name="Saito K."/>
            <person name="Kawai Y."/>
            <person name="Isono Y."/>
            <person name="Nakamura Y."/>
            <person name="Nagahari K."/>
            <person name="Murakami K."/>
            <person name="Yasuda T."/>
            <person name="Iwayanagi T."/>
            <person name="Wagatsuma M."/>
            <person name="Shiratori A."/>
            <person name="Sudo H."/>
            <person name="Hosoiri T."/>
            <person name="Kaku Y."/>
            <person name="Kodaira H."/>
            <person name="Kondo H."/>
            <person name="Sugawara M."/>
            <person name="Takahashi M."/>
            <person name="Kanda K."/>
            <person name="Yokoi T."/>
            <person name="Furuya T."/>
            <person name="Kikkawa E."/>
            <person name="Omura Y."/>
            <person name="Abe K."/>
            <person name="Kamihara K."/>
            <person name="Katsuta N."/>
            <person name="Sato K."/>
            <person name="Tanikawa M."/>
            <person name="Yamazaki M."/>
            <person name="Ninomiya K."/>
            <person name="Ishibashi T."/>
            <person name="Yamashita H."/>
            <person name="Murakawa K."/>
            <person name="Fujimori K."/>
            <person name="Tanai H."/>
            <person name="Kimata M."/>
            <person name="Watanabe M."/>
            <person name="Hiraoka S."/>
            <person name="Chiba Y."/>
            <person name="Ishida S."/>
            <person name="Ono Y."/>
            <person name="Takiguchi S."/>
            <person name="Watanabe S."/>
            <person name="Yosida M."/>
            <person name="Hotuta T."/>
            <person name="Kusano J."/>
            <person name="Kanehori K."/>
            <person name="Takahashi-Fujii A."/>
            <person name="Hara H."/>
            <person name="Tanase T.-O."/>
            <person name="Nomura Y."/>
            <person name="Togiya S."/>
            <person name="Komai F."/>
            <person name="Hara R."/>
            <person name="Takeuchi K."/>
            <person name="Arita M."/>
            <person name="Imose N."/>
            <person name="Musashino K."/>
            <person name="Yuuki H."/>
            <person name="Oshima A."/>
            <person name="Sasaki N."/>
            <person name="Aotsuka S."/>
            <person name="Yoshikawa Y."/>
            <person name="Matsunawa H."/>
            <person name="Ichihara T."/>
            <person name="Shiohata N."/>
            <person name="Sano S."/>
            <person name="Moriya S."/>
            <person name="Momiyama H."/>
            <person name="Satoh N."/>
            <person name="Takami S."/>
            <person name="Terashima Y."/>
            <person name="Suzuki O."/>
            <person name="Nakagawa S."/>
            <person name="Senoh A."/>
            <person name="Mizoguchi H."/>
            <person name="Goto Y."/>
            <person name="Shimizu F."/>
            <person name="Wakebe H."/>
            <person name="Hishigaki H."/>
            <person name="Watanabe T."/>
            <person name="Sugiyama A."/>
            <person name="Takemoto M."/>
            <person name="Kawakami B."/>
            <person name="Yamazaki M."/>
            <person name="Watanabe K."/>
            <person name="Kumagai A."/>
            <person name="Itakura S."/>
            <person name="Fukuzumi Y."/>
            <person name="Fujimori Y."/>
            <person name="Komiyama M."/>
            <person name="Tashiro H."/>
            <person name="Tanigami A."/>
            <person name="Fujiwara T."/>
            <person name="Ono T."/>
            <person name="Yamada K."/>
            <person name="Fujii Y."/>
            <person name="Ozaki K."/>
            <person name="Hirao M."/>
            <person name="Ohmori Y."/>
            <person name="Kawabata A."/>
            <person name="Hikiji T."/>
            <person name="Kobatake N."/>
            <person name="Inagaki H."/>
            <person name="Ikema Y."/>
            <person name="Okamoto S."/>
            <person name="Okitani R."/>
            <person name="Kawakami T."/>
            <person name="Noguchi S."/>
            <person name="Itoh T."/>
            <person name="Shigeta K."/>
            <person name="Senba T."/>
            <person name="Matsumura K."/>
            <person name="Nakajima Y."/>
            <person name="Mizuno T."/>
            <person name="Morinaga M."/>
            <person name="Sasaki M."/>
            <person name="Togashi T."/>
            <person name="Oyama M."/>
            <person name="Hata H."/>
            <person name="Watanabe M."/>
            <person name="Komatsu T."/>
            <person name="Mizushima-Sugano J."/>
            <person name="Satoh T."/>
            <person name="Shirai Y."/>
            <person name="Takahashi Y."/>
            <person name="Nakagawa K."/>
            <person name="Okumura K."/>
            <person name="Nagase T."/>
            <person name="Nomura N."/>
            <person name="Kikuchi H."/>
            <person name="Masuho Y."/>
            <person name="Yamashita R."/>
            <person name="Nakai K."/>
            <person name="Yada T."/>
            <person name="Nakamura Y."/>
            <person name="Ohara O."/>
            <person name="Isogai T."/>
            <person name="Sugano S."/>
        </authorList>
    </citation>
    <scope>NUCLEOTIDE SEQUENCE [LARGE SCALE MRNA]</scope>
    <source>
        <tissue>Testis</tissue>
    </source>
</reference>
<reference key="2">
    <citation type="submission" date="2005-07" db="EMBL/GenBank/DDBJ databases">
        <authorList>
            <person name="Mural R.J."/>
            <person name="Istrail S."/>
            <person name="Sutton G.G."/>
            <person name="Florea L."/>
            <person name="Halpern A.L."/>
            <person name="Mobarry C.M."/>
            <person name="Lippert R."/>
            <person name="Walenz B."/>
            <person name="Shatkay H."/>
            <person name="Dew I."/>
            <person name="Miller J.R."/>
            <person name="Flanigan M.J."/>
            <person name="Edwards N.J."/>
            <person name="Bolanos R."/>
            <person name="Fasulo D."/>
            <person name="Halldorsson B.V."/>
            <person name="Hannenhalli S."/>
            <person name="Turner R."/>
            <person name="Yooseph S."/>
            <person name="Lu F."/>
            <person name="Nusskern D.R."/>
            <person name="Shue B.C."/>
            <person name="Zheng X.H."/>
            <person name="Zhong F."/>
            <person name="Delcher A.L."/>
            <person name="Huson D.H."/>
            <person name="Kravitz S.A."/>
            <person name="Mouchard L."/>
            <person name="Reinert K."/>
            <person name="Remington K.A."/>
            <person name="Clark A.G."/>
            <person name="Waterman M.S."/>
            <person name="Eichler E.E."/>
            <person name="Adams M.D."/>
            <person name="Hunkapiller M.W."/>
            <person name="Myers E.W."/>
            <person name="Venter J.C."/>
        </authorList>
    </citation>
    <scope>NUCLEOTIDE SEQUENCE [LARGE SCALE GENOMIC DNA]</scope>
</reference>
<reference key="3">
    <citation type="journal article" date="2004" name="Genome Res.">
        <title>The status, quality, and expansion of the NIH full-length cDNA project: the Mammalian Gene Collection (MGC).</title>
        <authorList>
            <consortium name="The MGC Project Team"/>
        </authorList>
    </citation>
    <scope>NUCLEOTIDE SEQUENCE [LARGE SCALE MRNA]</scope>
    <scope>VARIANT ARG-201</scope>
    <source>
        <tissue>Testis</tissue>
    </source>
</reference>
<reference key="4">
    <citation type="journal article" date="2017" name="Nat. Struct. Mol. Biol.">
        <title>Site-specific mapping of the human SUMO proteome reveals co-modification with phosphorylation.</title>
        <authorList>
            <person name="Hendriks I.A."/>
            <person name="Lyon D."/>
            <person name="Young C."/>
            <person name="Jensen L.J."/>
            <person name="Vertegaal A.C."/>
            <person name="Nielsen M.L."/>
        </authorList>
    </citation>
    <scope>SUMOYLATION [LARGE SCALE ANALYSIS] AT LYS-179</scope>
    <scope>IDENTIFICATION BY MASS SPECTROMETRY [LARGE SCALE ANALYSIS]</scope>
</reference>
<reference key="5">
    <citation type="journal article" date="2006" name="Science">
        <title>The consensus coding sequences of human breast and colorectal cancers.</title>
        <authorList>
            <person name="Sjoeblom T."/>
            <person name="Jones S."/>
            <person name="Wood L.D."/>
            <person name="Parsons D.W."/>
            <person name="Lin J."/>
            <person name="Barber T.D."/>
            <person name="Mandelker D."/>
            <person name="Leary R.J."/>
            <person name="Ptak J."/>
            <person name="Silliman N."/>
            <person name="Szabo S."/>
            <person name="Buckhaults P."/>
            <person name="Farrell C."/>
            <person name="Meeh P."/>
            <person name="Markowitz S.D."/>
            <person name="Willis J."/>
            <person name="Dawson D."/>
            <person name="Willson J.K.V."/>
            <person name="Gazdar A.F."/>
            <person name="Hartigan J."/>
            <person name="Wu L."/>
            <person name="Liu C."/>
            <person name="Parmigiani G."/>
            <person name="Park B.H."/>
            <person name="Bachman K.E."/>
            <person name="Papadopoulos N."/>
            <person name="Vogelstein B."/>
            <person name="Kinzler K.W."/>
            <person name="Velculescu V.E."/>
        </authorList>
    </citation>
    <scope>VARIANT [LARGE SCALE ANALYSIS] VAL-15</scope>
</reference>
<organism>
    <name type="scientific">Homo sapiens</name>
    <name type="common">Human</name>
    <dbReference type="NCBI Taxonomy" id="9606"/>
    <lineage>
        <taxon>Eukaryota</taxon>
        <taxon>Metazoa</taxon>
        <taxon>Chordata</taxon>
        <taxon>Craniata</taxon>
        <taxon>Vertebrata</taxon>
        <taxon>Euteleostomi</taxon>
        <taxon>Mammalia</taxon>
        <taxon>Eutheria</taxon>
        <taxon>Euarchontoglires</taxon>
        <taxon>Primates</taxon>
        <taxon>Haplorrhini</taxon>
        <taxon>Catarrhini</taxon>
        <taxon>Hominidae</taxon>
        <taxon>Homo</taxon>
    </lineage>
</organism>